<organism evidence="4">
    <name type="scientific">Cyclopes didactylus</name>
    <name type="common">Silky anteater</name>
    <name type="synonym">Myrmecophaga didactyla</name>
    <dbReference type="NCBI Taxonomy" id="84074"/>
    <lineage>
        <taxon>Eukaryota</taxon>
        <taxon>Metazoa</taxon>
        <taxon>Chordata</taxon>
        <taxon>Craniata</taxon>
        <taxon>Vertebrata</taxon>
        <taxon>Euteleostomi</taxon>
        <taxon>Mammalia</taxon>
        <taxon>Eutheria</taxon>
        <taxon>Xenarthra</taxon>
        <taxon>Pilosa</taxon>
        <taxon>Vermilingua</taxon>
        <taxon>Cyclopedidae</taxon>
        <taxon>Cyclopes</taxon>
    </lineage>
</organism>
<feature type="chain" id="PRO_0000433500" description="Collagen alpha-2(I) chain" evidence="3">
    <location>
        <begin position="1"/>
        <end position="838"/>
    </location>
</feature>
<feature type="region of interest" description="Disordered" evidence="2">
    <location>
        <begin position="1"/>
        <end position="838"/>
    </location>
</feature>
<feature type="compositionally biased region" description="Low complexity" evidence="2">
    <location>
        <begin position="11"/>
        <end position="38"/>
    </location>
</feature>
<feature type="compositionally biased region" description="Basic and acidic residues" evidence="2">
    <location>
        <begin position="39"/>
        <end position="53"/>
    </location>
</feature>
<feature type="compositionally biased region" description="Low complexity" evidence="2">
    <location>
        <begin position="101"/>
        <end position="122"/>
    </location>
</feature>
<feature type="compositionally biased region" description="Low complexity" evidence="2">
    <location>
        <begin position="137"/>
        <end position="147"/>
    </location>
</feature>
<feature type="compositionally biased region" description="Low complexity" evidence="2">
    <location>
        <begin position="215"/>
        <end position="236"/>
    </location>
</feature>
<feature type="compositionally biased region" description="Low complexity" evidence="2">
    <location>
        <begin position="329"/>
        <end position="344"/>
    </location>
</feature>
<feature type="compositionally biased region" description="Gly residues" evidence="2">
    <location>
        <begin position="351"/>
        <end position="360"/>
    </location>
</feature>
<feature type="compositionally biased region" description="Low complexity" evidence="2">
    <location>
        <begin position="407"/>
        <end position="424"/>
    </location>
</feature>
<feature type="compositionally biased region" description="Low complexity" evidence="2">
    <location>
        <begin position="436"/>
        <end position="446"/>
    </location>
</feature>
<feature type="compositionally biased region" description="Gly residues" evidence="2">
    <location>
        <begin position="447"/>
        <end position="456"/>
    </location>
</feature>
<feature type="compositionally biased region" description="Low complexity" evidence="2">
    <location>
        <begin position="479"/>
        <end position="523"/>
    </location>
</feature>
<feature type="compositionally biased region" description="Low complexity" evidence="2">
    <location>
        <begin position="530"/>
        <end position="550"/>
    </location>
</feature>
<feature type="compositionally biased region" description="Low complexity" evidence="2">
    <location>
        <begin position="568"/>
        <end position="581"/>
    </location>
</feature>
<feature type="compositionally biased region" description="Gly residues" evidence="2">
    <location>
        <begin position="582"/>
        <end position="591"/>
    </location>
</feature>
<feature type="compositionally biased region" description="Low complexity" evidence="2">
    <location>
        <begin position="593"/>
        <end position="602"/>
    </location>
</feature>
<feature type="compositionally biased region" description="Gly residues" evidence="2">
    <location>
        <begin position="633"/>
        <end position="642"/>
    </location>
</feature>
<feature type="compositionally biased region" description="Low complexity" evidence="2">
    <location>
        <begin position="649"/>
        <end position="689"/>
    </location>
</feature>
<feature type="compositionally biased region" description="Gly residues" evidence="2">
    <location>
        <begin position="693"/>
        <end position="702"/>
    </location>
</feature>
<feature type="compositionally biased region" description="Low complexity" evidence="2">
    <location>
        <begin position="703"/>
        <end position="718"/>
    </location>
</feature>
<feature type="compositionally biased region" description="Low complexity" evidence="2">
    <location>
        <begin position="736"/>
        <end position="758"/>
    </location>
</feature>
<feature type="compositionally biased region" description="Low complexity" evidence="2">
    <location>
        <begin position="766"/>
        <end position="781"/>
    </location>
</feature>
<feature type="unsure residue" description="I or L" evidence="3">
    <location>
        <position position="5"/>
    </location>
</feature>
<feature type="unsure residue" description="I or L" evidence="3">
    <location>
        <position position="68"/>
    </location>
</feature>
<feature type="unsure residue" description="I or L" evidence="3">
    <location>
        <position position="71"/>
    </location>
</feature>
<feature type="unsure residue" description="I or L" evidence="3">
    <location>
        <position position="86"/>
    </location>
</feature>
<feature type="unsure residue" description="I or L" evidence="3">
    <location>
        <position position="117"/>
    </location>
</feature>
<feature type="unsure residue" description="I or L" evidence="3">
    <location>
        <position position="135"/>
    </location>
</feature>
<feature type="unsure residue" description="I or L" evidence="3">
    <location>
        <position position="157"/>
    </location>
</feature>
<feature type="unsure residue" description="I or L" evidence="3">
    <location>
        <position position="166"/>
    </location>
</feature>
<feature type="unsure residue" description="I or L" evidence="3">
    <location>
        <position position="181"/>
    </location>
</feature>
<feature type="unsure residue" description="I or L" evidence="3">
    <location>
        <position position="229"/>
    </location>
</feature>
<feature type="unsure residue" description="I or L" evidence="3">
    <location>
        <position position="235"/>
    </location>
</feature>
<feature type="unsure residue" description="I or L" evidence="3">
    <location>
        <position position="274"/>
    </location>
</feature>
<feature type="unsure residue" description="I or L" evidence="3">
    <location>
        <position position="286"/>
    </location>
</feature>
<feature type="unsure residue" description="I or L" evidence="3">
    <location>
        <position position="289"/>
    </location>
</feature>
<feature type="unsure residue" description="I or L" evidence="3">
    <location>
        <position position="305"/>
    </location>
</feature>
<feature type="unsure residue" description="I or L" evidence="3">
    <location>
        <position position="328"/>
    </location>
</feature>
<feature type="unsure residue" description="I or L" evidence="3">
    <location>
        <position position="370"/>
    </location>
</feature>
<feature type="unsure residue" description="I or L" evidence="3">
    <location>
        <position position="388"/>
    </location>
</feature>
<feature type="unsure residue" description="I or L" evidence="3">
    <location>
        <position position="394"/>
    </location>
</feature>
<feature type="unsure residue" description="I or L" evidence="3">
    <location>
        <position position="419"/>
    </location>
</feature>
<feature type="unsure residue" description="I or L" evidence="3">
    <location>
        <position position="454"/>
    </location>
</feature>
<feature type="unsure residue" description="I or L" evidence="3">
    <location>
        <position position="475"/>
    </location>
</feature>
<feature type="unsure residue" description="I or L" evidence="3">
    <location>
        <position position="566"/>
    </location>
</feature>
<feature type="unsure residue" description="I or L" evidence="3">
    <location>
        <position position="610"/>
    </location>
</feature>
<feature type="unsure residue" description="I or L" evidence="3">
    <location>
        <position position="655"/>
    </location>
</feature>
<feature type="unsure residue" description="I or L" evidence="3">
    <location>
        <position position="656"/>
    </location>
</feature>
<feature type="unsure residue" description="I or L" evidence="3">
    <location>
        <position position="661"/>
    </location>
</feature>
<feature type="unsure residue" description="I or L" evidence="3">
    <location>
        <position position="662"/>
    </location>
</feature>
<feature type="unsure residue" description="I or L" evidence="3">
    <location>
        <position position="664"/>
    </location>
</feature>
<feature type="unsure residue" description="I or L" evidence="3">
    <location>
        <position position="670"/>
    </location>
</feature>
<feature type="unsure residue" description="I or L" evidence="3">
    <location>
        <position position="683"/>
    </location>
</feature>
<feature type="unsure residue" description="I or L" evidence="3">
    <location>
        <position position="685"/>
    </location>
</feature>
<feature type="unsure residue" description="I or L" evidence="3">
    <location>
        <position position="727"/>
    </location>
</feature>
<feature type="unsure residue" description="I or L" evidence="3">
    <location>
        <position position="779"/>
    </location>
</feature>
<feature type="unsure residue" description="I or L" evidence="3">
    <location>
        <position position="785"/>
    </location>
</feature>
<feature type="unsure residue" description="I or L" evidence="3">
    <location>
        <position position="788"/>
    </location>
</feature>
<feature type="unsure residue" description="I or L" evidence="3">
    <location>
        <position position="791"/>
    </location>
</feature>
<feature type="unsure residue" description="I or L" evidence="3">
    <location>
        <position position="836"/>
    </location>
</feature>
<feature type="non-consecutive residues" evidence="4">
    <location>
        <begin position="9"/>
        <end position="10"/>
    </location>
</feature>
<feature type="non-consecutive residues" evidence="4">
    <location>
        <begin position="63"/>
        <end position="64"/>
    </location>
</feature>
<feature type="non-consecutive residues" evidence="4">
    <location>
        <begin position="81"/>
        <end position="82"/>
    </location>
</feature>
<feature type="non-consecutive residues" evidence="4">
    <location>
        <begin position="151"/>
        <end position="152"/>
    </location>
</feature>
<feature type="non-consecutive residues" evidence="4">
    <location>
        <begin position="161"/>
        <end position="162"/>
    </location>
</feature>
<feature type="non-consecutive residues" evidence="4">
    <location>
        <begin position="191"/>
        <end position="192"/>
    </location>
</feature>
<feature type="non-consecutive residues" evidence="4">
    <location>
        <begin position="231"/>
        <end position="232"/>
    </location>
</feature>
<feature type="non-consecutive residues" evidence="4">
    <location>
        <begin position="278"/>
        <end position="279"/>
    </location>
</feature>
<feature type="non-consecutive residues" evidence="4">
    <location>
        <begin position="299"/>
        <end position="300"/>
    </location>
</feature>
<feature type="non-consecutive residues" evidence="4">
    <location>
        <begin position="554"/>
        <end position="555"/>
    </location>
</feature>
<feature type="non-consecutive residues" evidence="4">
    <location>
        <begin position="622"/>
        <end position="623"/>
    </location>
</feature>
<feature type="non-consecutive residues" evidence="4">
    <location>
        <begin position="647"/>
        <end position="648"/>
    </location>
</feature>
<feature type="non-consecutive residues" evidence="4">
    <location>
        <begin position="668"/>
        <end position="669"/>
    </location>
</feature>
<feature type="non-consecutive residues" evidence="4">
    <location>
        <begin position="782"/>
        <end position="783"/>
    </location>
</feature>
<proteinExistence type="evidence at protein level"/>
<reference evidence="5" key="1">
    <citation type="journal article" date="2015" name="Nature">
        <title>Ancient proteins resolve the evolutionary history of Darwin's South American ungulates.</title>
        <authorList>
            <person name="Welker F."/>
            <person name="Collins M.J."/>
            <person name="Thomas J.A."/>
            <person name="Wadsley M."/>
            <person name="Brace S."/>
            <person name="Cappellini E."/>
            <person name="Turvey S.T."/>
            <person name="Reguero M."/>
            <person name="Gelfo J.N."/>
            <person name="Kramarz A."/>
            <person name="Burger J."/>
            <person name="Thomas-Oates J."/>
            <person name="Ashford D.A."/>
            <person name="Ashton P.D."/>
            <person name="Rowsell K."/>
            <person name="Porter D.M."/>
            <person name="Kessler B."/>
            <person name="Fischer R."/>
            <person name="Baessmann C."/>
            <person name="Kaspar S."/>
            <person name="Olsen J.V."/>
            <person name="Kiley P."/>
            <person name="Elliott J.A."/>
            <person name="Kelstrup C.D."/>
            <person name="Mullin V."/>
            <person name="Hofreiter M."/>
            <person name="Willerslev E."/>
            <person name="Hublin J.J."/>
            <person name="Orlando L."/>
            <person name="Barnes I."/>
            <person name="MacPhee R.D."/>
        </authorList>
    </citation>
    <scope>PROTEIN SEQUENCE</scope>
    <scope>IDENTIFICATION BY MASS SPECTROMETRY</scope>
    <source>
        <tissue evidence="4">Bone</tissue>
    </source>
</reference>
<accession>C0HJP2</accession>
<comment type="function">
    <text evidence="5">Type I collagen is a member of group I collagen (fibrillar forming collagen).</text>
</comment>
<comment type="subunit">
    <text evidence="1">Trimers of one alpha 2(I) and two alpha 1(I) chains. Interacts (via C-terminus) with TMEM131 (via PapD-L domain); the interaction is direct and is involved in assembly and TRAPPIII ER-to-Golgi transport complex-dependent secretion of collagen.</text>
</comment>
<comment type="subcellular location">
    <subcellularLocation>
        <location>Secreted</location>
    </subcellularLocation>
    <subcellularLocation>
        <location>Secreted</location>
        <location>Extracellular space</location>
    </subcellularLocation>
    <subcellularLocation>
        <location evidence="5">Secreted</location>
        <location evidence="5">Extracellular space</location>
        <location evidence="5">Extracellular matrix</location>
    </subcellularLocation>
</comment>
<comment type="tissue specificity">
    <text evidence="5">Forms the fibrils of tendon, ligaments and bones. In bones, the fibrils are mineralized with calcium hydroxyapatite.</text>
</comment>
<comment type="PTM">
    <text evidence="5">Prolines at the third position of the tripeptide repeating unit (G-X-Y) are hydroxylated in some or all of the chains.</text>
</comment>
<comment type="similarity">
    <text evidence="5">Belongs to the fibrillar collagen family.</text>
</comment>
<sequence>GPMGIMGPRGFQGPAGEPGEPGQTGPAGARGPAGPPGKAGEDGHPGKPGRPGERGVVGPQGARGHNGIDGIKGQAGAPGVKGARGIPGERGRVGAPGPAGSRGSDGSVGPVGPAGPIGSAGPPGFPGAPGPKGEIGPVGNTGPAGPAGPRGKGAAGIPGVAGPRGIPGPVGASGATGARGIVGEPGPAGSKGEPGSAGPQGPPGPSGEEGKRGPNGESGSSGPTGPPGIRGSRGIPGADGRAGVMGPAGARGASGPTGVRGPSGDTGRPGEPGIMGPRGKEGPVGIPGIDGRVGPAGPAGEAGNIGFPGPKGPTGDPGKVGEKGHAGIAGNRGAPGPDGNNGAQGPPGPQGVQGGKGEQGPAGPPGFQGIPGPAGTTGEVGKPGERGITGEFGIPGPAGPRGERGPPGESGAAGPSGPIGSRGPSGPPGPDGNKGEPGVVGAPGTAGPAGSGGIPGERGAAGMPGGKGEKGETGIRGEVGTTGRDGARGAPGAVGAPGPAGATGDRGEAGAAGPAGPAGPRGTPGERGEVGPAGPNGFAGPAGAAGQPGAKGERGENGVVGPTGPIGSAGPAGPDGTPGPAGSRGDGGPPGVTGFPGAAGRTGPPGPSGITGPPGPPGAAGKRGDQGPVGRSGETGAGGPPGFTGEKGTAGPQGIIGAPGIIGIPGSRGIPGVSGSVGEPGPIGISGPPGARGPSGGVGNPGVNGAPGEAGRDGNPGNDGPPGRDGIPGHKGERGYAGNPGPVGAAGAPGPHGSVGPAGKHGNRGEPGPVGSVGPVGAIGPRNGIQGIPGIAGQHGDQGAPGSVGPAGPRGPAGPGGPPGKDGRTGHPGTVGPAGIRS</sequence>
<evidence type="ECO:0000250" key="1">
    <source>
        <dbReference type="UniProtKB" id="P08123"/>
    </source>
</evidence>
<evidence type="ECO:0000256" key="2">
    <source>
        <dbReference type="SAM" id="MobiDB-lite"/>
    </source>
</evidence>
<evidence type="ECO:0000269" key="3">
    <source>
    </source>
</evidence>
<evidence type="ECO:0000303" key="4">
    <source>
    </source>
</evidence>
<evidence type="ECO:0000305" key="5"/>
<name>CO1A2_CYCDI</name>
<gene>
    <name evidence="1" type="primary">COL1A2</name>
</gene>
<dbReference type="GO" id="GO:0005581">
    <property type="term" value="C:collagen trimer"/>
    <property type="evidence" value="ECO:0007669"/>
    <property type="project" value="UniProtKB-KW"/>
</dbReference>
<dbReference type="GO" id="GO:0031012">
    <property type="term" value="C:extracellular matrix"/>
    <property type="evidence" value="ECO:0007669"/>
    <property type="project" value="TreeGrafter"/>
</dbReference>
<dbReference type="GO" id="GO:0005615">
    <property type="term" value="C:extracellular space"/>
    <property type="evidence" value="ECO:0007669"/>
    <property type="project" value="TreeGrafter"/>
</dbReference>
<dbReference type="InterPro" id="IPR008160">
    <property type="entry name" value="Collagen"/>
</dbReference>
<dbReference type="InterPro" id="IPR050149">
    <property type="entry name" value="Collagen_superfamily"/>
</dbReference>
<dbReference type="PANTHER" id="PTHR24023">
    <property type="entry name" value="COLLAGEN ALPHA"/>
    <property type="match status" value="1"/>
</dbReference>
<dbReference type="PANTHER" id="PTHR24023:SF1082">
    <property type="entry name" value="COLLAGEN TRIPLE HELIX REPEAT"/>
    <property type="match status" value="1"/>
</dbReference>
<dbReference type="Pfam" id="PF01391">
    <property type="entry name" value="Collagen"/>
    <property type="match status" value="1"/>
</dbReference>
<keyword id="KW-0106">Calcium</keyword>
<keyword id="KW-0176">Collagen</keyword>
<keyword id="KW-0903">Direct protein sequencing</keyword>
<keyword id="KW-0272">Extracellular matrix</keyword>
<keyword id="KW-0379">Hydroxylation</keyword>
<keyword id="KW-0677">Repeat</keyword>
<keyword id="KW-0964">Secreted</keyword>
<protein>
    <recommendedName>
        <fullName evidence="4">Collagen alpha-2(I) chain</fullName>
    </recommendedName>
    <alternativeName>
        <fullName evidence="1">Alpha-2 type I collagen</fullName>
    </alternativeName>
</protein>